<name>SYT_CHLFF</name>
<reference key="1">
    <citation type="journal article" date="2006" name="DNA Res.">
        <title>Genome sequence of the cat pathogen, Chlamydophila felis.</title>
        <authorList>
            <person name="Azuma Y."/>
            <person name="Hirakawa H."/>
            <person name="Yamashita A."/>
            <person name="Cai Y."/>
            <person name="Rahman M.A."/>
            <person name="Suzuki H."/>
            <person name="Mitaku S."/>
            <person name="Toh H."/>
            <person name="Goto S."/>
            <person name="Murakami T."/>
            <person name="Sugi K."/>
            <person name="Hayashi H."/>
            <person name="Fukushi H."/>
            <person name="Hattori M."/>
            <person name="Kuhara S."/>
            <person name="Shirai M."/>
        </authorList>
    </citation>
    <scope>NUCLEOTIDE SEQUENCE [LARGE SCALE GENOMIC DNA]</scope>
    <source>
        <strain>Fe/C-56</strain>
    </source>
</reference>
<feature type="chain" id="PRO_1000020366" description="Threonine--tRNA ligase">
    <location>
        <begin position="1"/>
        <end position="635"/>
    </location>
</feature>
<feature type="domain" description="TGS" evidence="2">
    <location>
        <begin position="1"/>
        <end position="58"/>
    </location>
</feature>
<feature type="region of interest" description="Catalytic" evidence="1">
    <location>
        <begin position="237"/>
        <end position="528"/>
    </location>
</feature>
<feature type="binding site" evidence="1">
    <location>
        <position position="328"/>
    </location>
    <ligand>
        <name>Zn(2+)</name>
        <dbReference type="ChEBI" id="CHEBI:29105"/>
    </ligand>
</feature>
<feature type="binding site" evidence="1">
    <location>
        <position position="379"/>
    </location>
    <ligand>
        <name>Zn(2+)</name>
        <dbReference type="ChEBI" id="CHEBI:29105"/>
    </ligand>
</feature>
<feature type="binding site" evidence="1">
    <location>
        <position position="505"/>
    </location>
    <ligand>
        <name>Zn(2+)</name>
        <dbReference type="ChEBI" id="CHEBI:29105"/>
    </ligand>
</feature>
<sequence length="635" mass="72838">MIRVICDNETFELPTGSTAADFASKIKNSHYFAGVVINDQIKDLSTTLSEGDVLKFVTFTDPEGREIFLHTSAHMLAQAVLRLWPQAIPTIGPVIDLGFYYDFANLSISEDDFPAIENMVEQIAKERFEISKKTFNDKQEALQEFASNPFKVELIQEFPEDENITCYSQGEFMDLCRGPHLPSTAPVKAFKLLRTSAAYWRGDPSRESLVRIYGVSFPTTKELKEHLHQLEEAKKRDHRVLGTKLDLFSQQECSAGMPFFHPRGMIIWDALIGYWKRLHQLAGYKEILTPQLVNRSLWEVSGHWSNYKENMYTLKIDEEDYAIKPMNCPGCMLYYKTRLHSYKEFPLRIAEIGHVHRYEISGALSGLMRVRAFHQDDAHVFLTPEQVEEETLNILNLVSELYSTFGLEYHLELSTRPEKATIGSDELWDLATAALERALINSNTPFVINPGDGAFYGPKIDIHVKDAIQRTWQCGTIQLDMFLPERFELEYTNAQGEKSTPIMLHRALFGSIERFLGILIEHFKGRFPLWLSPEHVRLITVADRHQPRAQELATAWQQLGFVVTVDDSNESVSKKIRNAQNMQVNYMVTLGDREIEENTLAVRTRDNRVLNNMTIDTFINTILEEKNSLSLTPLL</sequence>
<proteinExistence type="inferred from homology"/>
<dbReference type="EC" id="6.1.1.3" evidence="1"/>
<dbReference type="EMBL" id="AP006861">
    <property type="protein sequence ID" value="BAE80829.1"/>
    <property type="molecule type" value="Genomic_DNA"/>
</dbReference>
<dbReference type="RefSeq" id="WP_011457614.1">
    <property type="nucleotide sequence ID" value="NC_007899.1"/>
</dbReference>
<dbReference type="SMR" id="Q256F9"/>
<dbReference type="STRING" id="264202.CF0057"/>
<dbReference type="KEGG" id="cfe:CF0057"/>
<dbReference type="eggNOG" id="COG0441">
    <property type="taxonomic scope" value="Bacteria"/>
</dbReference>
<dbReference type="HOGENOM" id="CLU_008554_3_1_0"/>
<dbReference type="OrthoDB" id="9802304at2"/>
<dbReference type="Proteomes" id="UP000001260">
    <property type="component" value="Chromosome"/>
</dbReference>
<dbReference type="GO" id="GO:0005737">
    <property type="term" value="C:cytoplasm"/>
    <property type="evidence" value="ECO:0007669"/>
    <property type="project" value="UniProtKB-SubCell"/>
</dbReference>
<dbReference type="GO" id="GO:0005524">
    <property type="term" value="F:ATP binding"/>
    <property type="evidence" value="ECO:0007669"/>
    <property type="project" value="UniProtKB-UniRule"/>
</dbReference>
<dbReference type="GO" id="GO:0046872">
    <property type="term" value="F:metal ion binding"/>
    <property type="evidence" value="ECO:0007669"/>
    <property type="project" value="UniProtKB-KW"/>
</dbReference>
<dbReference type="GO" id="GO:0004829">
    <property type="term" value="F:threonine-tRNA ligase activity"/>
    <property type="evidence" value="ECO:0007669"/>
    <property type="project" value="UniProtKB-UniRule"/>
</dbReference>
<dbReference type="GO" id="GO:0000049">
    <property type="term" value="F:tRNA binding"/>
    <property type="evidence" value="ECO:0007669"/>
    <property type="project" value="UniProtKB-KW"/>
</dbReference>
<dbReference type="GO" id="GO:0006435">
    <property type="term" value="P:threonyl-tRNA aminoacylation"/>
    <property type="evidence" value="ECO:0007669"/>
    <property type="project" value="UniProtKB-UniRule"/>
</dbReference>
<dbReference type="CDD" id="cd01667">
    <property type="entry name" value="TGS_ThrRS"/>
    <property type="match status" value="1"/>
</dbReference>
<dbReference type="CDD" id="cd00860">
    <property type="entry name" value="ThrRS_anticodon"/>
    <property type="match status" value="1"/>
</dbReference>
<dbReference type="CDD" id="cd00771">
    <property type="entry name" value="ThrRS_core"/>
    <property type="match status" value="1"/>
</dbReference>
<dbReference type="FunFam" id="3.30.930.10:FF:000019">
    <property type="entry name" value="Threonine--tRNA ligase"/>
    <property type="match status" value="1"/>
</dbReference>
<dbReference type="FunFam" id="3.40.50.800:FF:000001">
    <property type="entry name" value="Threonine--tRNA ligase"/>
    <property type="match status" value="1"/>
</dbReference>
<dbReference type="FunFam" id="3.30.980.10:FF:000005">
    <property type="entry name" value="Threonyl-tRNA synthetase, mitochondrial"/>
    <property type="match status" value="1"/>
</dbReference>
<dbReference type="Gene3D" id="3.10.20.30">
    <property type="match status" value="1"/>
</dbReference>
<dbReference type="Gene3D" id="3.30.54.20">
    <property type="match status" value="1"/>
</dbReference>
<dbReference type="Gene3D" id="3.40.50.800">
    <property type="entry name" value="Anticodon-binding domain"/>
    <property type="match status" value="1"/>
</dbReference>
<dbReference type="Gene3D" id="3.30.930.10">
    <property type="entry name" value="Bira Bifunctional Protein, Domain 2"/>
    <property type="match status" value="1"/>
</dbReference>
<dbReference type="Gene3D" id="3.30.980.10">
    <property type="entry name" value="Threonyl-trna Synthetase, Chain A, domain 2"/>
    <property type="match status" value="1"/>
</dbReference>
<dbReference type="HAMAP" id="MF_00184">
    <property type="entry name" value="Thr_tRNA_synth"/>
    <property type="match status" value="1"/>
</dbReference>
<dbReference type="InterPro" id="IPR002314">
    <property type="entry name" value="aa-tRNA-synt_IIb"/>
</dbReference>
<dbReference type="InterPro" id="IPR006195">
    <property type="entry name" value="aa-tRNA-synth_II"/>
</dbReference>
<dbReference type="InterPro" id="IPR045864">
    <property type="entry name" value="aa-tRNA-synth_II/BPL/LPL"/>
</dbReference>
<dbReference type="InterPro" id="IPR004154">
    <property type="entry name" value="Anticodon-bd"/>
</dbReference>
<dbReference type="InterPro" id="IPR036621">
    <property type="entry name" value="Anticodon-bd_dom_sf"/>
</dbReference>
<dbReference type="InterPro" id="IPR012675">
    <property type="entry name" value="Beta-grasp_dom_sf"/>
</dbReference>
<dbReference type="InterPro" id="IPR004095">
    <property type="entry name" value="TGS"/>
</dbReference>
<dbReference type="InterPro" id="IPR012676">
    <property type="entry name" value="TGS-like"/>
</dbReference>
<dbReference type="InterPro" id="IPR002320">
    <property type="entry name" value="Thr-tRNA-ligase_IIa"/>
</dbReference>
<dbReference type="InterPro" id="IPR018163">
    <property type="entry name" value="Thr/Ala-tRNA-synth_IIc_edit"/>
</dbReference>
<dbReference type="InterPro" id="IPR047246">
    <property type="entry name" value="ThrRS_anticodon"/>
</dbReference>
<dbReference type="InterPro" id="IPR033728">
    <property type="entry name" value="ThrRS_core"/>
</dbReference>
<dbReference type="InterPro" id="IPR012947">
    <property type="entry name" value="tRNA_SAD"/>
</dbReference>
<dbReference type="NCBIfam" id="TIGR00418">
    <property type="entry name" value="thrS"/>
    <property type="match status" value="1"/>
</dbReference>
<dbReference type="PANTHER" id="PTHR11451:SF44">
    <property type="entry name" value="THREONINE--TRNA LIGASE, CHLOROPLASTIC_MITOCHONDRIAL 2"/>
    <property type="match status" value="1"/>
</dbReference>
<dbReference type="PANTHER" id="PTHR11451">
    <property type="entry name" value="THREONINE-TRNA LIGASE"/>
    <property type="match status" value="1"/>
</dbReference>
<dbReference type="Pfam" id="PF03129">
    <property type="entry name" value="HGTP_anticodon"/>
    <property type="match status" value="1"/>
</dbReference>
<dbReference type="Pfam" id="PF02824">
    <property type="entry name" value="TGS"/>
    <property type="match status" value="1"/>
</dbReference>
<dbReference type="Pfam" id="PF00587">
    <property type="entry name" value="tRNA-synt_2b"/>
    <property type="match status" value="1"/>
</dbReference>
<dbReference type="Pfam" id="PF07973">
    <property type="entry name" value="tRNA_SAD"/>
    <property type="match status" value="1"/>
</dbReference>
<dbReference type="PRINTS" id="PR01047">
    <property type="entry name" value="TRNASYNTHTHR"/>
</dbReference>
<dbReference type="SMART" id="SM00863">
    <property type="entry name" value="tRNA_SAD"/>
    <property type="match status" value="1"/>
</dbReference>
<dbReference type="SUPFAM" id="SSF52954">
    <property type="entry name" value="Class II aaRS ABD-related"/>
    <property type="match status" value="1"/>
</dbReference>
<dbReference type="SUPFAM" id="SSF55681">
    <property type="entry name" value="Class II aaRS and biotin synthetases"/>
    <property type="match status" value="1"/>
</dbReference>
<dbReference type="SUPFAM" id="SSF81271">
    <property type="entry name" value="TGS-like"/>
    <property type="match status" value="1"/>
</dbReference>
<dbReference type="SUPFAM" id="SSF55186">
    <property type="entry name" value="ThrRS/AlaRS common domain"/>
    <property type="match status" value="1"/>
</dbReference>
<dbReference type="PROSITE" id="PS50862">
    <property type="entry name" value="AA_TRNA_LIGASE_II"/>
    <property type="match status" value="1"/>
</dbReference>
<dbReference type="PROSITE" id="PS51880">
    <property type="entry name" value="TGS"/>
    <property type="match status" value="1"/>
</dbReference>
<evidence type="ECO:0000255" key="1">
    <source>
        <dbReference type="HAMAP-Rule" id="MF_00184"/>
    </source>
</evidence>
<evidence type="ECO:0000255" key="2">
    <source>
        <dbReference type="PROSITE-ProRule" id="PRU01228"/>
    </source>
</evidence>
<protein>
    <recommendedName>
        <fullName evidence="1">Threonine--tRNA ligase</fullName>
        <ecNumber evidence="1">6.1.1.3</ecNumber>
    </recommendedName>
    <alternativeName>
        <fullName evidence="1">Threonyl-tRNA synthetase</fullName>
        <shortName evidence="1">ThrRS</shortName>
    </alternativeName>
</protein>
<keyword id="KW-0030">Aminoacyl-tRNA synthetase</keyword>
<keyword id="KW-0067">ATP-binding</keyword>
<keyword id="KW-0963">Cytoplasm</keyword>
<keyword id="KW-0436">Ligase</keyword>
<keyword id="KW-0479">Metal-binding</keyword>
<keyword id="KW-0547">Nucleotide-binding</keyword>
<keyword id="KW-0648">Protein biosynthesis</keyword>
<keyword id="KW-0694">RNA-binding</keyword>
<keyword id="KW-0820">tRNA-binding</keyword>
<keyword id="KW-0862">Zinc</keyword>
<comment type="function">
    <text evidence="1">Catalyzes the attachment of threonine to tRNA(Thr) in a two-step reaction: L-threonine is first activated by ATP to form Thr-AMP and then transferred to the acceptor end of tRNA(Thr). Also edits incorrectly charged L-seryl-tRNA(Thr).</text>
</comment>
<comment type="catalytic activity">
    <reaction evidence="1">
        <text>tRNA(Thr) + L-threonine + ATP = L-threonyl-tRNA(Thr) + AMP + diphosphate + H(+)</text>
        <dbReference type="Rhea" id="RHEA:24624"/>
        <dbReference type="Rhea" id="RHEA-COMP:9670"/>
        <dbReference type="Rhea" id="RHEA-COMP:9704"/>
        <dbReference type="ChEBI" id="CHEBI:15378"/>
        <dbReference type="ChEBI" id="CHEBI:30616"/>
        <dbReference type="ChEBI" id="CHEBI:33019"/>
        <dbReference type="ChEBI" id="CHEBI:57926"/>
        <dbReference type="ChEBI" id="CHEBI:78442"/>
        <dbReference type="ChEBI" id="CHEBI:78534"/>
        <dbReference type="ChEBI" id="CHEBI:456215"/>
        <dbReference type="EC" id="6.1.1.3"/>
    </reaction>
</comment>
<comment type="cofactor">
    <cofactor evidence="1">
        <name>Zn(2+)</name>
        <dbReference type="ChEBI" id="CHEBI:29105"/>
    </cofactor>
    <text evidence="1">Binds 1 zinc ion per subunit.</text>
</comment>
<comment type="subunit">
    <text evidence="1">Homodimer.</text>
</comment>
<comment type="subcellular location">
    <subcellularLocation>
        <location evidence="1">Cytoplasm</location>
    </subcellularLocation>
</comment>
<comment type="similarity">
    <text evidence="1">Belongs to the class-II aminoacyl-tRNA synthetase family.</text>
</comment>
<organism>
    <name type="scientific">Chlamydia felis (strain Fe/C-56)</name>
    <name type="common">Chlamydophila felis</name>
    <dbReference type="NCBI Taxonomy" id="264202"/>
    <lineage>
        <taxon>Bacteria</taxon>
        <taxon>Pseudomonadati</taxon>
        <taxon>Chlamydiota</taxon>
        <taxon>Chlamydiia</taxon>
        <taxon>Chlamydiales</taxon>
        <taxon>Chlamydiaceae</taxon>
        <taxon>Chlamydia/Chlamydophila group</taxon>
        <taxon>Chlamydia</taxon>
    </lineage>
</organism>
<accession>Q256F9</accession>
<gene>
    <name evidence="1" type="primary">thrS</name>
    <name type="ordered locus">CF0057</name>
</gene>